<name>PPR81_ARATH</name>
<comment type="similarity">
    <text evidence="1">Belongs to the PPR family. P subfamily.</text>
</comment>
<comment type="sequence caution" evidence="1">
    <conflict type="erroneous gene model prediction">
        <sequence resource="EMBL-CDS" id="AAF79508"/>
    </conflict>
</comment>
<comment type="online information" name="Pentatricopeptide repeat proteins">
    <link uri="https://ppr.plantenergy.uwa.edu.au"/>
</comment>
<reference key="1">
    <citation type="journal article" date="2000" name="Nature">
        <title>Sequence and analysis of chromosome 1 of the plant Arabidopsis thaliana.</title>
        <authorList>
            <person name="Theologis A."/>
            <person name="Ecker J.R."/>
            <person name="Palm C.J."/>
            <person name="Federspiel N.A."/>
            <person name="Kaul S."/>
            <person name="White O."/>
            <person name="Alonso J."/>
            <person name="Altafi H."/>
            <person name="Araujo R."/>
            <person name="Bowman C.L."/>
            <person name="Brooks S.Y."/>
            <person name="Buehler E."/>
            <person name="Chan A."/>
            <person name="Chao Q."/>
            <person name="Chen H."/>
            <person name="Cheuk R.F."/>
            <person name="Chin C.W."/>
            <person name="Chung M.K."/>
            <person name="Conn L."/>
            <person name="Conway A.B."/>
            <person name="Conway A.R."/>
            <person name="Creasy T.H."/>
            <person name="Dewar K."/>
            <person name="Dunn P."/>
            <person name="Etgu P."/>
            <person name="Feldblyum T.V."/>
            <person name="Feng J.-D."/>
            <person name="Fong B."/>
            <person name="Fujii C.Y."/>
            <person name="Gill J.E."/>
            <person name="Goldsmith A.D."/>
            <person name="Haas B."/>
            <person name="Hansen N.F."/>
            <person name="Hughes B."/>
            <person name="Huizar L."/>
            <person name="Hunter J.L."/>
            <person name="Jenkins J."/>
            <person name="Johnson-Hopson C."/>
            <person name="Khan S."/>
            <person name="Khaykin E."/>
            <person name="Kim C.J."/>
            <person name="Koo H.L."/>
            <person name="Kremenetskaia I."/>
            <person name="Kurtz D.B."/>
            <person name="Kwan A."/>
            <person name="Lam B."/>
            <person name="Langin-Hooper S."/>
            <person name="Lee A."/>
            <person name="Lee J.M."/>
            <person name="Lenz C.A."/>
            <person name="Li J.H."/>
            <person name="Li Y.-P."/>
            <person name="Lin X."/>
            <person name="Liu S.X."/>
            <person name="Liu Z.A."/>
            <person name="Luros J.S."/>
            <person name="Maiti R."/>
            <person name="Marziali A."/>
            <person name="Militscher J."/>
            <person name="Miranda M."/>
            <person name="Nguyen M."/>
            <person name="Nierman W.C."/>
            <person name="Osborne B.I."/>
            <person name="Pai G."/>
            <person name="Peterson J."/>
            <person name="Pham P.K."/>
            <person name="Rizzo M."/>
            <person name="Rooney T."/>
            <person name="Rowley D."/>
            <person name="Sakano H."/>
            <person name="Salzberg S.L."/>
            <person name="Schwartz J.R."/>
            <person name="Shinn P."/>
            <person name="Southwick A.M."/>
            <person name="Sun H."/>
            <person name="Tallon L.J."/>
            <person name="Tambunga G."/>
            <person name="Toriumi M.J."/>
            <person name="Town C.D."/>
            <person name="Utterback T."/>
            <person name="Van Aken S."/>
            <person name="Vaysberg M."/>
            <person name="Vysotskaia V.S."/>
            <person name="Walker M."/>
            <person name="Wu D."/>
            <person name="Yu G."/>
            <person name="Fraser C.M."/>
            <person name="Venter J.C."/>
            <person name="Davis R.W."/>
        </authorList>
    </citation>
    <scope>NUCLEOTIDE SEQUENCE [LARGE SCALE GENOMIC DNA]</scope>
    <source>
        <strain>cv. Columbia</strain>
    </source>
</reference>
<reference key="2">
    <citation type="journal article" date="2017" name="Plant J.">
        <title>Araport11: a complete reannotation of the Arabidopsis thaliana reference genome.</title>
        <authorList>
            <person name="Cheng C.Y."/>
            <person name="Krishnakumar V."/>
            <person name="Chan A.P."/>
            <person name="Thibaud-Nissen F."/>
            <person name="Schobel S."/>
            <person name="Town C.D."/>
        </authorList>
    </citation>
    <scope>GENOME REANNOTATION</scope>
    <source>
        <strain>cv. Columbia</strain>
    </source>
</reference>
<reference key="3">
    <citation type="journal article" date="2003" name="Science">
        <title>Empirical analysis of transcriptional activity in the Arabidopsis genome.</title>
        <authorList>
            <person name="Yamada K."/>
            <person name="Lim J."/>
            <person name="Dale J.M."/>
            <person name="Chen H."/>
            <person name="Shinn P."/>
            <person name="Palm C.J."/>
            <person name="Southwick A.M."/>
            <person name="Wu H.C."/>
            <person name="Kim C.J."/>
            <person name="Nguyen M."/>
            <person name="Pham P.K."/>
            <person name="Cheuk R.F."/>
            <person name="Karlin-Newmann G."/>
            <person name="Liu S.X."/>
            <person name="Lam B."/>
            <person name="Sakano H."/>
            <person name="Wu T."/>
            <person name="Yu G."/>
            <person name="Miranda M."/>
            <person name="Quach H.L."/>
            <person name="Tripp M."/>
            <person name="Chang C.H."/>
            <person name="Lee J.M."/>
            <person name="Toriumi M.J."/>
            <person name="Chan M.M."/>
            <person name="Tang C.C."/>
            <person name="Onodera C.S."/>
            <person name="Deng J.M."/>
            <person name="Akiyama K."/>
            <person name="Ansari Y."/>
            <person name="Arakawa T."/>
            <person name="Banh J."/>
            <person name="Banno F."/>
            <person name="Bowser L."/>
            <person name="Brooks S.Y."/>
            <person name="Carninci P."/>
            <person name="Chao Q."/>
            <person name="Choy N."/>
            <person name="Enju A."/>
            <person name="Goldsmith A.D."/>
            <person name="Gurjal M."/>
            <person name="Hansen N.F."/>
            <person name="Hayashizaki Y."/>
            <person name="Johnson-Hopson C."/>
            <person name="Hsuan V.W."/>
            <person name="Iida K."/>
            <person name="Karnes M."/>
            <person name="Khan S."/>
            <person name="Koesema E."/>
            <person name="Ishida J."/>
            <person name="Jiang P.X."/>
            <person name="Jones T."/>
            <person name="Kawai J."/>
            <person name="Kamiya A."/>
            <person name="Meyers C."/>
            <person name="Nakajima M."/>
            <person name="Narusaka M."/>
            <person name="Seki M."/>
            <person name="Sakurai T."/>
            <person name="Satou M."/>
            <person name="Tamse R."/>
            <person name="Vaysberg M."/>
            <person name="Wallender E.K."/>
            <person name="Wong C."/>
            <person name="Yamamura Y."/>
            <person name="Yuan S."/>
            <person name="Shinozaki K."/>
            <person name="Davis R.W."/>
            <person name="Theologis A."/>
            <person name="Ecker J.R."/>
        </authorList>
    </citation>
    <scope>NUCLEOTIDE SEQUENCE [LARGE SCALE MRNA]</scope>
    <source>
        <strain>cv. Columbia</strain>
    </source>
</reference>
<reference key="4">
    <citation type="submission" date="2006-07" db="EMBL/GenBank/DDBJ databases">
        <title>Large-scale analysis of RIKEN Arabidopsis full-length (RAFL) cDNAs.</title>
        <authorList>
            <person name="Totoki Y."/>
            <person name="Seki M."/>
            <person name="Ishida J."/>
            <person name="Nakajima M."/>
            <person name="Enju A."/>
            <person name="Kamiya A."/>
            <person name="Narusaka M."/>
            <person name="Shin-i T."/>
            <person name="Nakagawa M."/>
            <person name="Sakamoto N."/>
            <person name="Oishi K."/>
            <person name="Kohara Y."/>
            <person name="Kobayashi M."/>
            <person name="Toyoda A."/>
            <person name="Sakaki Y."/>
            <person name="Sakurai T."/>
            <person name="Iida K."/>
            <person name="Akiyama K."/>
            <person name="Satou M."/>
            <person name="Toyoda T."/>
            <person name="Konagaya A."/>
            <person name="Carninci P."/>
            <person name="Kawai J."/>
            <person name="Hayashizaki Y."/>
            <person name="Shinozaki K."/>
        </authorList>
    </citation>
    <scope>NUCLEOTIDE SEQUENCE [LARGE SCALE MRNA]</scope>
    <source>
        <strain>cv. Columbia</strain>
    </source>
</reference>
<reference key="5">
    <citation type="journal article" date="2004" name="Plant Cell">
        <title>Genome-wide analysis of Arabidopsis pentatricopeptide repeat proteins reveals their essential role in organelle biogenesis.</title>
        <authorList>
            <person name="Lurin C."/>
            <person name="Andres C."/>
            <person name="Aubourg S."/>
            <person name="Bellaoui M."/>
            <person name="Bitton F."/>
            <person name="Bruyere C."/>
            <person name="Caboche M."/>
            <person name="Debast C."/>
            <person name="Gualberto J."/>
            <person name="Hoffmann B."/>
            <person name="Lecharny A."/>
            <person name="Le Ret M."/>
            <person name="Martin-Magniette M.-L."/>
            <person name="Mireau H."/>
            <person name="Peeters N."/>
            <person name="Renou J.-P."/>
            <person name="Szurek B."/>
            <person name="Taconnat L."/>
            <person name="Small I."/>
        </authorList>
    </citation>
    <scope>GENE FAMILY</scope>
</reference>
<protein>
    <recommendedName>
        <fullName>Pentatricopeptide repeat-containing protein At1g55630</fullName>
    </recommendedName>
</protein>
<feature type="chain" id="PRO_0000342822" description="Pentatricopeptide repeat-containing protein At1g55630">
    <location>
        <begin position="1"/>
        <end position="477"/>
    </location>
</feature>
<feature type="repeat" description="PPR 1">
    <location>
        <begin position="151"/>
        <end position="185"/>
    </location>
</feature>
<feature type="repeat" description="PPR 2">
    <location>
        <begin position="186"/>
        <end position="220"/>
    </location>
</feature>
<feature type="repeat" description="PPR 3">
    <location>
        <begin position="221"/>
        <end position="255"/>
    </location>
</feature>
<feature type="repeat" description="PPR 4">
    <location>
        <begin position="256"/>
        <end position="290"/>
    </location>
</feature>
<feature type="repeat" description="PPR 5">
    <location>
        <begin position="291"/>
        <end position="325"/>
    </location>
</feature>
<feature type="repeat" description="PPR 6">
    <location>
        <begin position="326"/>
        <end position="360"/>
    </location>
</feature>
<feature type="repeat" description="PPR 7">
    <location>
        <begin position="361"/>
        <end position="395"/>
    </location>
</feature>
<feature type="repeat" description="PPR 8">
    <location>
        <begin position="396"/>
        <end position="430"/>
    </location>
</feature>
<feature type="repeat" description="PPR 9">
    <location>
        <begin position="431"/>
        <end position="465"/>
    </location>
</feature>
<keyword id="KW-1185">Reference proteome</keyword>
<keyword id="KW-0677">Repeat</keyword>
<organism>
    <name type="scientific">Arabidopsis thaliana</name>
    <name type="common">Mouse-ear cress</name>
    <dbReference type="NCBI Taxonomy" id="3702"/>
    <lineage>
        <taxon>Eukaryota</taxon>
        <taxon>Viridiplantae</taxon>
        <taxon>Streptophyta</taxon>
        <taxon>Embryophyta</taxon>
        <taxon>Tracheophyta</taxon>
        <taxon>Spermatophyta</taxon>
        <taxon>Magnoliopsida</taxon>
        <taxon>eudicotyledons</taxon>
        <taxon>Gunneridae</taxon>
        <taxon>Pentapetalae</taxon>
        <taxon>rosids</taxon>
        <taxon>malvids</taxon>
        <taxon>Brassicales</taxon>
        <taxon>Brassicaceae</taxon>
        <taxon>Camelineae</taxon>
        <taxon>Arabidopsis</taxon>
    </lineage>
</organism>
<proteinExistence type="evidence at transcript level"/>
<evidence type="ECO:0000305" key="1"/>
<sequence length="477" mass="54183">MNSVIHYSTSVAVRKASRFLFTSRKFCNGSIGGDVTDNGTEEPLKITWESSEMDCEFDQEENGEKISVRKRFMESTKLSASRVLDTLQQDCPGFNTKSALDELNVSISGLLVREVLVGILRTLSFDNKTRCAKLAYKFFVWCGGQENFRHTANCYHLLMKIFAECGEYKAMCRLIDEMIKDGYPTTACTFNLLICTCGEAGLARDVVEQFIKSKTFNYRPYKHSYNAILHSLLGVKQYKLIDWVYEQMLEDGFTPDVLTYNIVMFANFRLGKTDRLYRLLDEMVKDGFSPDLYTYNILLHHLATGNKPLAALNLLNHMREVGVEPGVIHFTTLIDGLSRAGKLEACKYFMDETVKVGCTPDVVCYTVMITGYISGGELEKAEEMFKEMTEKGQLPNVFTYNSMIRGFCMAGKFKEACALLKEMESRGCNPNFVVYSTLVNNLKNAGKVLEAHEVVKDMVEKGHYVHLISKLKKYRRS</sequence>
<gene>
    <name type="ordered locus">At1g55630</name>
    <name type="ORF">F20N2.6</name>
</gene>
<accession>Q7X6A5</accession>
<accession>Q9LG03</accession>
<dbReference type="EMBL" id="AC002328">
    <property type="protein sequence ID" value="AAF79508.1"/>
    <property type="status" value="ALT_SEQ"/>
    <property type="molecule type" value="Genomic_DNA"/>
</dbReference>
<dbReference type="EMBL" id="CP002684">
    <property type="protein sequence ID" value="AEE33276.1"/>
    <property type="molecule type" value="Genomic_DNA"/>
</dbReference>
<dbReference type="EMBL" id="BT008546">
    <property type="protein sequence ID" value="AAP40373.1"/>
    <property type="molecule type" value="mRNA"/>
</dbReference>
<dbReference type="EMBL" id="BT008642">
    <property type="protein sequence ID" value="AAP40457.1"/>
    <property type="molecule type" value="mRNA"/>
</dbReference>
<dbReference type="EMBL" id="AK229723">
    <property type="protein sequence ID" value="BAF01561.1"/>
    <property type="molecule type" value="mRNA"/>
</dbReference>
<dbReference type="PIR" id="G96598">
    <property type="entry name" value="G96598"/>
</dbReference>
<dbReference type="RefSeq" id="NP_175959.1">
    <property type="nucleotide sequence ID" value="NM_104439.4"/>
</dbReference>
<dbReference type="SMR" id="Q7X6A5"/>
<dbReference type="FunCoup" id="Q7X6A5">
    <property type="interactions" value="881"/>
</dbReference>
<dbReference type="PaxDb" id="3702-AT1G55630.1"/>
<dbReference type="ProteomicsDB" id="226371"/>
<dbReference type="EnsemblPlants" id="AT1G55630.1">
    <property type="protein sequence ID" value="AT1G55630.1"/>
    <property type="gene ID" value="AT1G55630"/>
</dbReference>
<dbReference type="GeneID" id="842012"/>
<dbReference type="Gramene" id="AT1G55630.1">
    <property type="protein sequence ID" value="AT1G55630.1"/>
    <property type="gene ID" value="AT1G55630"/>
</dbReference>
<dbReference type="KEGG" id="ath:AT1G55630"/>
<dbReference type="Araport" id="AT1G55630"/>
<dbReference type="TAIR" id="AT1G55630"/>
<dbReference type="eggNOG" id="KOG4197">
    <property type="taxonomic scope" value="Eukaryota"/>
</dbReference>
<dbReference type="HOGENOM" id="CLU_002706_49_25_1"/>
<dbReference type="InParanoid" id="Q7X6A5"/>
<dbReference type="OMA" id="GNMDACK"/>
<dbReference type="PhylomeDB" id="Q7X6A5"/>
<dbReference type="PRO" id="PR:Q7X6A5"/>
<dbReference type="Proteomes" id="UP000006548">
    <property type="component" value="Chromosome 1"/>
</dbReference>
<dbReference type="ExpressionAtlas" id="Q7X6A5">
    <property type="expression patterns" value="baseline and differential"/>
</dbReference>
<dbReference type="Gene3D" id="1.25.40.10">
    <property type="entry name" value="Tetratricopeptide repeat domain"/>
    <property type="match status" value="3"/>
</dbReference>
<dbReference type="InterPro" id="IPR002885">
    <property type="entry name" value="Pentatricopeptide_rpt"/>
</dbReference>
<dbReference type="InterPro" id="IPR050872">
    <property type="entry name" value="PPR_P_subfamily"/>
</dbReference>
<dbReference type="InterPro" id="IPR011990">
    <property type="entry name" value="TPR-like_helical_dom_sf"/>
</dbReference>
<dbReference type="NCBIfam" id="TIGR00756">
    <property type="entry name" value="PPR"/>
    <property type="match status" value="6"/>
</dbReference>
<dbReference type="PANTHER" id="PTHR46128">
    <property type="entry name" value="MITOCHONDRIAL GROUP I INTRON SPLICING FACTOR CCM1"/>
    <property type="match status" value="1"/>
</dbReference>
<dbReference type="PANTHER" id="PTHR46128:SF211">
    <property type="entry name" value="PENTACOTRIPEPTIDE-REPEAT REGION OF PRORP DOMAIN-CONTAINING PROTEIN"/>
    <property type="match status" value="1"/>
</dbReference>
<dbReference type="Pfam" id="PF12854">
    <property type="entry name" value="PPR_1"/>
    <property type="match status" value="1"/>
</dbReference>
<dbReference type="Pfam" id="PF13041">
    <property type="entry name" value="PPR_2"/>
    <property type="match status" value="2"/>
</dbReference>
<dbReference type="Pfam" id="PF13812">
    <property type="entry name" value="PPR_3"/>
    <property type="match status" value="2"/>
</dbReference>
<dbReference type="PROSITE" id="PS51375">
    <property type="entry name" value="PPR"/>
    <property type="match status" value="9"/>
</dbReference>